<feature type="initiator methionine" description="Removed" evidence="3 6">
    <location>
        <position position="1"/>
    </location>
</feature>
<feature type="chain" id="PRO_0000153542" description="Small ribosomal subunit protein eS1B">
    <location>
        <begin position="2"/>
        <end position="255"/>
    </location>
</feature>
<feature type="modified residue" description="N-acetylalanine; partial" evidence="2 3">
    <location>
        <position position="2"/>
    </location>
</feature>
<feature type="modified residue" description="Phosphoserine" evidence="14 15 16">
    <location>
        <position position="245"/>
    </location>
</feature>
<feature type="modified residue" description="Phosphothreonine" evidence="14 15">
    <location>
        <position position="254"/>
    </location>
</feature>
<feature type="cross-link" description="Glycyl lysine isopeptide (Lys-Gly) (interchain with G-Cter in ubiquitin)" evidence="17">
    <location>
        <position position="248"/>
    </location>
</feature>
<accession>P23248</accession>
<accession>D6VZB0</accession>
<dbReference type="EMBL" id="X55360">
    <property type="protein sequence ID" value="CAA39044.1"/>
    <property type="molecule type" value="Genomic_DNA"/>
</dbReference>
<dbReference type="EMBL" id="Z38114">
    <property type="protein sequence ID" value="CAA86258.1"/>
    <property type="molecule type" value="Genomic_DNA"/>
</dbReference>
<dbReference type="EMBL" id="AY557981">
    <property type="protein sequence ID" value="AAS56307.1"/>
    <property type="molecule type" value="Genomic_DNA"/>
</dbReference>
<dbReference type="EMBL" id="BK006946">
    <property type="protein sequence ID" value="DAA09834.1"/>
    <property type="molecule type" value="Genomic_DNA"/>
</dbReference>
<dbReference type="PIR" id="S14051">
    <property type="entry name" value="S14051"/>
</dbReference>
<dbReference type="RefSeq" id="NP_013648.1">
    <property type="nucleotide sequence ID" value="NM_001182422.1"/>
</dbReference>
<dbReference type="PDB" id="6WOO">
    <property type="method" value="EM"/>
    <property type="resolution" value="2.90 A"/>
    <property type="chains" value="BB=20-233"/>
</dbReference>
<dbReference type="PDBsum" id="6WOO"/>
<dbReference type="EMDB" id="EMD-21859"/>
<dbReference type="SMR" id="P23248"/>
<dbReference type="BioGRID" id="35103">
    <property type="interactions" value="338"/>
</dbReference>
<dbReference type="ComplexPortal" id="CPX-1599">
    <property type="entry name" value="40S cytosolic small ribosomal subunit"/>
</dbReference>
<dbReference type="FunCoup" id="P23248">
    <property type="interactions" value="1594"/>
</dbReference>
<dbReference type="IntAct" id="P23248">
    <property type="interactions" value="133"/>
</dbReference>
<dbReference type="MINT" id="P23248"/>
<dbReference type="STRING" id="4932.YML063W"/>
<dbReference type="iPTMnet" id="P23248"/>
<dbReference type="PaxDb" id="4932-YML063W"/>
<dbReference type="PeptideAtlas" id="P23248"/>
<dbReference type="TopDownProteomics" id="P23248"/>
<dbReference type="EnsemblFungi" id="YML063W_mRNA">
    <property type="protein sequence ID" value="YML063W"/>
    <property type="gene ID" value="YML063W"/>
</dbReference>
<dbReference type="GeneID" id="854939"/>
<dbReference type="KEGG" id="sce:YML063W"/>
<dbReference type="AGR" id="SGD:S000004528"/>
<dbReference type="SGD" id="S000004528">
    <property type="gene designation" value="RPS1B"/>
</dbReference>
<dbReference type="VEuPathDB" id="FungiDB:YML063W"/>
<dbReference type="eggNOG" id="KOG1628">
    <property type="taxonomic scope" value="Eukaryota"/>
</dbReference>
<dbReference type="GeneTree" id="ENSGT00940000165721"/>
<dbReference type="HOGENOM" id="CLU_062507_0_0_1"/>
<dbReference type="InParanoid" id="P23248"/>
<dbReference type="OMA" id="TRFKGHE"/>
<dbReference type="OrthoDB" id="9834376at2759"/>
<dbReference type="BioCyc" id="YEAST:G3O-32658-MONOMER"/>
<dbReference type="Reactome" id="R-SCE-156827">
    <property type="pathway name" value="L13a-mediated translational silencing of Ceruloplasmin expression"/>
</dbReference>
<dbReference type="Reactome" id="R-SCE-1799339">
    <property type="pathway name" value="SRP-dependent cotranslational protein targeting to membrane"/>
</dbReference>
<dbReference type="Reactome" id="R-SCE-5689880">
    <property type="pathway name" value="Ub-specific processing proteases"/>
</dbReference>
<dbReference type="Reactome" id="R-SCE-72649">
    <property type="pathway name" value="Translation initiation complex formation"/>
</dbReference>
<dbReference type="Reactome" id="R-SCE-72689">
    <property type="pathway name" value="Formation of a pool of free 40S subunits"/>
</dbReference>
<dbReference type="Reactome" id="R-SCE-72695">
    <property type="pathway name" value="Formation of the ternary complex, and subsequently, the 43S complex"/>
</dbReference>
<dbReference type="Reactome" id="R-SCE-72702">
    <property type="pathway name" value="Ribosomal scanning and start codon recognition"/>
</dbReference>
<dbReference type="Reactome" id="R-SCE-72706">
    <property type="pathway name" value="GTP hydrolysis and joining of the 60S ribosomal subunit"/>
</dbReference>
<dbReference type="Reactome" id="R-SCE-936440">
    <property type="pathway name" value="Negative regulators of DDX58/IFIH1 signaling"/>
</dbReference>
<dbReference type="Reactome" id="R-SCE-975956">
    <property type="pathway name" value="Nonsense Mediated Decay (NMD) independent of the Exon Junction Complex (EJC)"/>
</dbReference>
<dbReference type="Reactome" id="R-SCE-975957">
    <property type="pathway name" value="Nonsense Mediated Decay (NMD) enhanced by the Exon Junction Complex (EJC)"/>
</dbReference>
<dbReference type="BioGRID-ORCS" id="854939">
    <property type="hits" value="1 hit in 10 CRISPR screens"/>
</dbReference>
<dbReference type="PRO" id="PR:P23248"/>
<dbReference type="Proteomes" id="UP000002311">
    <property type="component" value="Chromosome XIII"/>
</dbReference>
<dbReference type="RNAct" id="P23248">
    <property type="molecule type" value="protein"/>
</dbReference>
<dbReference type="GO" id="GO:0030686">
    <property type="term" value="C:90S preribosome"/>
    <property type="evidence" value="ECO:0007005"/>
    <property type="project" value="SGD"/>
</dbReference>
<dbReference type="GO" id="GO:0005829">
    <property type="term" value="C:cytosol"/>
    <property type="evidence" value="ECO:0000318"/>
    <property type="project" value="GO_Central"/>
</dbReference>
<dbReference type="GO" id="GO:0022627">
    <property type="term" value="C:cytosolic small ribosomal subunit"/>
    <property type="evidence" value="ECO:0000303"/>
    <property type="project" value="SGD"/>
</dbReference>
<dbReference type="GO" id="GO:0003735">
    <property type="term" value="F:structural constituent of ribosome"/>
    <property type="evidence" value="ECO:0000303"/>
    <property type="project" value="SGD"/>
</dbReference>
<dbReference type="GO" id="GO:0002181">
    <property type="term" value="P:cytoplasmic translation"/>
    <property type="evidence" value="ECO:0000303"/>
    <property type="project" value="SGD"/>
</dbReference>
<dbReference type="GO" id="GO:0000462">
    <property type="term" value="P:maturation of SSU-rRNA from tricistronic rRNA transcript (SSU-rRNA, 5.8S rRNA, LSU-rRNA)"/>
    <property type="evidence" value="ECO:0000316"/>
    <property type="project" value="SGD"/>
</dbReference>
<dbReference type="HAMAP" id="MF_03122">
    <property type="entry name" value="Ribosomal_eS1_euk"/>
    <property type="match status" value="1"/>
</dbReference>
<dbReference type="InterPro" id="IPR001593">
    <property type="entry name" value="Ribosomal_eS1"/>
</dbReference>
<dbReference type="InterPro" id="IPR018281">
    <property type="entry name" value="Ribosomal_eS1_CS"/>
</dbReference>
<dbReference type="InterPro" id="IPR027500">
    <property type="entry name" value="Ribosomal_eS1_euk"/>
</dbReference>
<dbReference type="PANTHER" id="PTHR11830">
    <property type="entry name" value="40S RIBOSOMAL PROTEIN S3A"/>
    <property type="match status" value="1"/>
</dbReference>
<dbReference type="Pfam" id="PF01015">
    <property type="entry name" value="Ribosomal_S3Ae"/>
    <property type="match status" value="1"/>
</dbReference>
<dbReference type="SMART" id="SM01397">
    <property type="entry name" value="Ribosomal_S3Ae"/>
    <property type="match status" value="1"/>
</dbReference>
<dbReference type="PROSITE" id="PS01191">
    <property type="entry name" value="RIBOSOMAL_S3AE"/>
    <property type="match status" value="1"/>
</dbReference>
<comment type="function">
    <text evidence="12">Component of the ribosome, a large ribonucleoprotein complex responsible for the synthesis of proteins in the cell. The small ribosomal subunit (SSU) binds messenger RNAs (mRNAs) and translates the encoded message by selecting cognate aminoacyl-transfer RNA (tRNA) molecules. The large subunit (LSU) contains the ribosomal catalytic site termed the peptidyl transferase center (PTC), which catalyzes the formation of peptide bonds, thereby polymerizing the amino acids delivered by tRNAs into a polypeptide chain. The nascent polypeptides leave the ribosome through a tunnel in the LSU and interact with protein factors that function in enzymatic processing, targeting, and the membrane insertion of nascent chains at the exit of the ribosomal tunnel.</text>
</comment>
<comment type="subunit">
    <text evidence="7 13">Component of the small ribosomal subunit (SSU). Mature yeast ribosomes consist of a small (40S) and a large (60S) subunit. The 40S small subunit contains 1 molecule of ribosomal RNA (18S rRNA) and 33 different proteins (encoded by 57 genes). The large 60S subunit contains 3 rRNA molecules (25S, 5.8S and 5S rRNA) and 46 different proteins (encoded by 81 genes). eS1 interacts directly with uS11 and eS26, which form part of the mRNA exit tunnel (PubMed:22096102, PubMed:9559554).</text>
</comment>
<comment type="subcellular location">
    <subcellularLocation>
        <location evidence="3 4 7">Cytoplasm</location>
    </subcellularLocation>
</comment>
<comment type="PTM">
    <text evidence="1">N-terminally acetylated by acetyltransferase NatA.</text>
</comment>
<comment type="miscellaneous">
    <text evidence="5">Present with 107000 molecules/cell in log phase SD medium.</text>
</comment>
<comment type="miscellaneous">
    <text evidence="10">There are 2 genes for eS1 in yeast.</text>
</comment>
<comment type="similarity">
    <text evidence="3">Belongs to the eukaryotic ribosomal protein eS1 family.</text>
</comment>
<comment type="caution">
    <text evidence="11">Was originally thought to be MFT1, the mitochondrial fusion target protein.</text>
</comment>
<reference key="1">
    <citation type="journal article" date="1991" name="Mol. Gen. Genet.">
        <title>Mitochondrial protein import: isolation and characterization of the Saccharomyces cerevisiae MFT1 gene.</title>
        <authorList>
            <person name="Garrett J.M."/>
            <person name="Singh K.K."/>
            <person name="Vonder Haar R.A."/>
            <person name="Emr S.D."/>
        </authorList>
    </citation>
    <scope>NUCLEOTIDE SEQUENCE [GENOMIC DNA]</scope>
    <source>
        <strain>SEY2102</strain>
    </source>
</reference>
<reference key="2">
    <citation type="journal article" date="1997" name="Nature">
        <title>The nucleotide sequence of Saccharomyces cerevisiae chromosome XIII.</title>
        <authorList>
            <person name="Bowman S."/>
            <person name="Churcher C.M."/>
            <person name="Badcock K."/>
            <person name="Brown D."/>
            <person name="Chillingworth T."/>
            <person name="Connor R."/>
            <person name="Dedman K."/>
            <person name="Devlin K."/>
            <person name="Gentles S."/>
            <person name="Hamlin N."/>
            <person name="Hunt S."/>
            <person name="Jagels K."/>
            <person name="Lye G."/>
            <person name="Moule S."/>
            <person name="Odell C."/>
            <person name="Pearson D."/>
            <person name="Rajandream M.A."/>
            <person name="Rice P."/>
            <person name="Skelton J."/>
            <person name="Walsh S.V."/>
            <person name="Whitehead S."/>
            <person name="Barrell B.G."/>
        </authorList>
    </citation>
    <scope>NUCLEOTIDE SEQUENCE [LARGE SCALE GENOMIC DNA]</scope>
    <source>
        <strain>ATCC 204508 / S288c</strain>
    </source>
</reference>
<reference key="3">
    <citation type="journal article" date="2014" name="G3 (Bethesda)">
        <title>The reference genome sequence of Saccharomyces cerevisiae: Then and now.</title>
        <authorList>
            <person name="Engel S.R."/>
            <person name="Dietrich F.S."/>
            <person name="Fisk D.G."/>
            <person name="Binkley G."/>
            <person name="Balakrishnan R."/>
            <person name="Costanzo M.C."/>
            <person name="Dwight S.S."/>
            <person name="Hitz B.C."/>
            <person name="Karra K."/>
            <person name="Nash R.S."/>
            <person name="Weng S."/>
            <person name="Wong E.D."/>
            <person name="Lloyd P."/>
            <person name="Skrzypek M.S."/>
            <person name="Miyasato S.R."/>
            <person name="Simison M."/>
            <person name="Cherry J.M."/>
        </authorList>
    </citation>
    <scope>GENOME REANNOTATION</scope>
    <source>
        <strain>ATCC 204508 / S288c</strain>
    </source>
</reference>
<reference key="4">
    <citation type="journal article" date="2007" name="Genome Res.">
        <title>Approaching a complete repository of sequence-verified protein-encoding clones for Saccharomyces cerevisiae.</title>
        <authorList>
            <person name="Hu Y."/>
            <person name="Rolfs A."/>
            <person name="Bhullar B."/>
            <person name="Murthy T.V.S."/>
            <person name="Zhu C."/>
            <person name="Berger M.F."/>
            <person name="Camargo A.A."/>
            <person name="Kelley F."/>
            <person name="McCarron S."/>
            <person name="Jepson D."/>
            <person name="Richardson A."/>
            <person name="Raphael J."/>
            <person name="Moreira D."/>
            <person name="Taycher E."/>
            <person name="Zuo D."/>
            <person name="Mohr S."/>
            <person name="Kane M.F."/>
            <person name="Williamson J."/>
            <person name="Simpson A.J.G."/>
            <person name="Bulyk M.L."/>
            <person name="Harlow E."/>
            <person name="Marsischky G."/>
            <person name="Kolodner R.D."/>
            <person name="LaBaer J."/>
        </authorList>
    </citation>
    <scope>NUCLEOTIDE SEQUENCE [GENOMIC DNA]</scope>
    <source>
        <strain>ATCC 204508 / S288c</strain>
    </source>
</reference>
<reference key="5">
    <citation type="journal article" date="1992" name="J. Biol. Chem.">
        <title>NH2-terminal acetylation of ribosomal proteins of Saccharomyces cerevisiae.</title>
        <authorList>
            <person name="Takakura H."/>
            <person name="Tsunasawa S."/>
            <person name="Miyagi M."/>
            <person name="Warner J.R."/>
        </authorList>
    </citation>
    <scope>PROTEIN SEQUENCE OF 2-21</scope>
</reference>
<reference key="6">
    <citation type="journal article" date="1998" name="Yeast">
        <title>The list of cytoplasmic ribosomal proteins of Saccharomyces cerevisiae.</title>
        <authorList>
            <person name="Planta R.J."/>
            <person name="Mager W.H."/>
        </authorList>
    </citation>
    <scope>NOMENCLATURE</scope>
    <scope>SUBUNIT</scope>
</reference>
<reference key="7">
    <citation type="journal article" date="2003" name="Nature">
        <title>Global analysis of protein localization in budding yeast.</title>
        <authorList>
            <person name="Huh W.-K."/>
            <person name="Falvo J.V."/>
            <person name="Gerke L.C."/>
            <person name="Carroll A.S."/>
            <person name="Howson R.W."/>
            <person name="Weissman J.S."/>
            <person name="O'Shea E.K."/>
        </authorList>
    </citation>
    <scope>SUBCELLULAR LOCATION [LARGE SCALE ANALYSIS]</scope>
</reference>
<reference key="8">
    <citation type="journal article" date="2003" name="Nature">
        <title>Global analysis of protein expression in yeast.</title>
        <authorList>
            <person name="Ghaemmaghami S."/>
            <person name="Huh W.-K."/>
            <person name="Bower K."/>
            <person name="Howson R.W."/>
            <person name="Belle A."/>
            <person name="Dephoure N."/>
            <person name="O'Shea E.K."/>
            <person name="Weissman J.S."/>
        </authorList>
    </citation>
    <scope>LEVEL OF PROTEIN EXPRESSION [LARGE SCALE ANALYSIS]</scope>
</reference>
<reference key="9">
    <citation type="journal article" date="2007" name="J. Proteome Res.">
        <title>Large-scale phosphorylation analysis of alpha-factor-arrested Saccharomyces cerevisiae.</title>
        <authorList>
            <person name="Li X."/>
            <person name="Gerber S.A."/>
            <person name="Rudner A.D."/>
            <person name="Beausoleil S.A."/>
            <person name="Haas W."/>
            <person name="Villen J."/>
            <person name="Elias J.E."/>
            <person name="Gygi S.P."/>
        </authorList>
    </citation>
    <scope>PHOSPHORYLATION [LARGE SCALE ANALYSIS] AT SER-245 AND THR-254</scope>
    <scope>IDENTIFICATION BY MASS SPECTROMETRY [LARGE SCALE ANALYSIS]</scope>
    <source>
        <strain>ADR376</strain>
    </source>
</reference>
<reference key="10">
    <citation type="journal article" date="2008" name="Mol. Cell. Proteomics">
        <title>A multidimensional chromatography technology for in-depth phosphoproteome analysis.</title>
        <authorList>
            <person name="Albuquerque C.P."/>
            <person name="Smolka M.B."/>
            <person name="Payne S.H."/>
            <person name="Bafna V."/>
            <person name="Eng J."/>
            <person name="Zhou H."/>
        </authorList>
    </citation>
    <scope>PHOSPHORYLATION [LARGE SCALE ANALYSIS] AT SER-245 AND THR-254</scope>
    <scope>IDENTIFICATION BY MASS SPECTROMETRY [LARGE SCALE ANALYSIS]</scope>
</reference>
<reference key="11">
    <citation type="journal article" date="2009" name="Science">
        <title>Global analysis of Cdk1 substrate phosphorylation sites provides insights into evolution.</title>
        <authorList>
            <person name="Holt L.J."/>
            <person name="Tuch B.B."/>
            <person name="Villen J."/>
            <person name="Johnson A.D."/>
            <person name="Gygi S.P."/>
            <person name="Morgan D.O."/>
        </authorList>
    </citation>
    <scope>PHOSPHORYLATION [LARGE SCALE ANALYSIS] AT SER-245</scope>
    <scope>IDENTIFICATION BY MASS SPECTROMETRY [LARGE SCALE ANALYSIS]</scope>
</reference>
<reference key="12">
    <citation type="journal article" date="2011" name="Science">
        <title>The structure of the eukaryotic ribosome at 3.0 A resolution.</title>
        <authorList>
            <person name="Ben-Shem A."/>
            <person name="Garreau de Loubresse N."/>
            <person name="Melnikov S."/>
            <person name="Jenner L."/>
            <person name="Yusupova G."/>
            <person name="Yusupov M."/>
        </authorList>
    </citation>
    <scope>SUBUNIT</scope>
    <scope>SUBCELLULAR LOCATION</scope>
</reference>
<reference key="13">
    <citation type="journal article" date="2012" name="Proteomics">
        <title>Sites of ubiquitin attachment in Saccharomyces cerevisiae.</title>
        <authorList>
            <person name="Starita L.M."/>
            <person name="Lo R.S."/>
            <person name="Eng J.K."/>
            <person name="von Haller P.D."/>
            <person name="Fields S."/>
        </authorList>
    </citation>
    <scope>UBIQUITINATION [LARGE SCALE ANALYSIS] AT LYS-248</scope>
    <scope>IDENTIFICATION BY MASS SPECTROMETRY [LARGE SCALE ANALYSIS]</scope>
</reference>
<reference key="14">
    <citation type="journal article" date="2014" name="Curr. Opin. Struct. Biol.">
        <title>A new system for naming ribosomal proteins.</title>
        <authorList>
            <person name="Ban N."/>
            <person name="Beckmann R."/>
            <person name="Cate J.H.D."/>
            <person name="Dinman J.D."/>
            <person name="Dragon F."/>
            <person name="Ellis S.R."/>
            <person name="Lafontaine D.L.J."/>
            <person name="Lindahl L."/>
            <person name="Liljas A."/>
            <person name="Lipton J.M."/>
            <person name="McAlear M.A."/>
            <person name="Moore P.B."/>
            <person name="Noller H.F."/>
            <person name="Ortega J."/>
            <person name="Panse V.G."/>
            <person name="Ramakrishnan V."/>
            <person name="Spahn C.M.T."/>
            <person name="Steitz T.A."/>
            <person name="Tchorzewski M."/>
            <person name="Tollervey D."/>
            <person name="Warren A.J."/>
            <person name="Williamson J.R."/>
            <person name="Wilson D."/>
            <person name="Yonath A."/>
            <person name="Yusupov M."/>
        </authorList>
    </citation>
    <scope>NOMENCLATURE</scope>
</reference>
<sequence>MAVGKNKRLSRGKKGLKKKVVDPFTRKEWFDIKAPSTFENRNVGKTLVNKSTGLKNASDALKGRVVEVCLADLQGSEDHSFRKVKLRVDEVQGKNLLTNFHGMDFTTDKLRSMVRKWQTLIEANVTVKTSDDYVLRIFAIAFTRKQANQVKRHSYAQSSHIRAIRKVISEILTREVQNSTLAQLTSKLIPEVINKEIENATKDIFPLQNIHVRKVKLLKQPKFDVGALMALHGEGSGEEKGKKVSGFKDEVLETV</sequence>
<gene>
    <name evidence="3 9" type="primary">RPS1B</name>
    <name type="synonym">PLC2</name>
    <name type="synonym">RPS10B</name>
    <name type="ordered locus">YML063W</name>
</gene>
<evidence type="ECO:0000250" key="1"/>
<evidence type="ECO:0000250" key="2">
    <source>
        <dbReference type="UniProtKB" id="P33442"/>
    </source>
</evidence>
<evidence type="ECO:0000255" key="3">
    <source>
        <dbReference type="HAMAP-Rule" id="MF_03122"/>
    </source>
</evidence>
<evidence type="ECO:0000269" key="4">
    <source>
    </source>
</evidence>
<evidence type="ECO:0000269" key="5">
    <source>
    </source>
</evidence>
<evidence type="ECO:0000269" key="6">
    <source>
    </source>
</evidence>
<evidence type="ECO:0000269" key="7">
    <source>
    </source>
</evidence>
<evidence type="ECO:0000303" key="8">
    <source>
    </source>
</evidence>
<evidence type="ECO:0000303" key="9">
    <source>
    </source>
</evidence>
<evidence type="ECO:0000305" key="10"/>
<evidence type="ECO:0000305" key="11">
    <source>
    </source>
</evidence>
<evidence type="ECO:0000305" key="12">
    <source>
    </source>
</evidence>
<evidence type="ECO:0000305" key="13">
    <source>
    </source>
</evidence>
<evidence type="ECO:0007744" key="14">
    <source>
    </source>
</evidence>
<evidence type="ECO:0007744" key="15">
    <source>
    </source>
</evidence>
<evidence type="ECO:0007744" key="16">
    <source>
    </source>
</evidence>
<evidence type="ECO:0007744" key="17">
    <source>
    </source>
</evidence>
<proteinExistence type="evidence at protein level"/>
<organism>
    <name type="scientific">Saccharomyces cerevisiae (strain ATCC 204508 / S288c)</name>
    <name type="common">Baker's yeast</name>
    <dbReference type="NCBI Taxonomy" id="559292"/>
    <lineage>
        <taxon>Eukaryota</taxon>
        <taxon>Fungi</taxon>
        <taxon>Dikarya</taxon>
        <taxon>Ascomycota</taxon>
        <taxon>Saccharomycotina</taxon>
        <taxon>Saccharomycetes</taxon>
        <taxon>Saccharomycetales</taxon>
        <taxon>Saccharomycetaceae</taxon>
        <taxon>Saccharomyces</taxon>
    </lineage>
</organism>
<keyword id="KW-0002">3D-structure</keyword>
<keyword id="KW-0007">Acetylation</keyword>
<keyword id="KW-0963">Cytoplasm</keyword>
<keyword id="KW-0903">Direct protein sequencing</keyword>
<keyword id="KW-1017">Isopeptide bond</keyword>
<keyword id="KW-0597">Phosphoprotein</keyword>
<keyword id="KW-1185">Reference proteome</keyword>
<keyword id="KW-0687">Ribonucleoprotein</keyword>
<keyword id="KW-0689">Ribosomal protein</keyword>
<keyword id="KW-0832">Ubl conjugation</keyword>
<protein>
    <recommendedName>
        <fullName evidence="3 8">Small ribosomal subunit protein eS1B</fullName>
    </recommendedName>
    <alternativeName>
        <fullName evidence="9">40S ribosomal protein S1-B</fullName>
    </alternativeName>
    <alternativeName>
        <fullName>RP10B</fullName>
    </alternativeName>
</protein>
<name>RS3A2_YEAST</name>